<comment type="function">
    <text evidence="4 5 6 7">Involved in pre-mRNA splicing. Functions in association with cyclin-dependent kinases (CDKs) (PubMed:18216018). Inhibited by the CDK-specific inhibitor CDKN1A/p21 (PubMed:11980906). May play a role in the regulation of RNA polymerase II (pol II). May be a candidate proto-oncogene in head and neck squamous cell carcinomas (HNSCC) (PubMed:12414649, PubMed:15700036).</text>
</comment>
<comment type="subunit">
    <text evidence="8">(Microbial infection) Interacts with human herpes virus 1 (HHV-1) transcriptional regulator ICP22.</text>
</comment>
<comment type="subunit">
    <text evidence="2 4 7">Interacts with POLR2A via its hyperphosphorylated C-terminal domain (CTD) (By similarity). Interacts with CDK11A, CDK12 and CDK13 (PubMed:11980906, PubMed:18216018). Isoforms 1 and 2, but not isoform 3, interact with CDK11B. May form a ternary complex with CDK11B and casein kinase II (CKII) (PubMed:18216018). Interacts with pre-mRNA-splicing factors, including at least SRSF1, SRSF2 and SRSF7/SLU7 (PubMed:11980906, PubMed:18216018).</text>
</comment>
<comment type="interaction">
    <interactant intactId="EBI-2836773">
        <id>Q9UK58</id>
    </interactant>
    <interactant intactId="EBI-743771">
        <id>Q92624</id>
        <label>APPBP2</label>
    </interactant>
    <organismsDiffer>false</organismsDiffer>
    <experiments>3</experiments>
</comment>
<comment type="interaction">
    <interactant intactId="EBI-2836773">
        <id>Q9UK58</id>
    </interactant>
    <interactant intactId="EBI-12861768">
        <id>Q6NVI2</id>
        <label>CASP8</label>
    </interactant>
    <organismsDiffer>false</organismsDiffer>
    <experiments>3</experiments>
</comment>
<comment type="interaction">
    <interactant intactId="EBI-2836773">
        <id>Q9UK58</id>
    </interactant>
    <interactant intactId="EBI-739789">
        <id>Q92997</id>
        <label>DVL3</label>
    </interactant>
    <organismsDiffer>false</organismsDiffer>
    <experiments>3</experiments>
</comment>
<comment type="interaction">
    <interactant intactId="EBI-2836773">
        <id>Q9UK58</id>
    </interactant>
    <interactant intactId="EBI-10268158">
        <id>Q8N9E0</id>
        <label>FAM133A</label>
    </interactant>
    <organismsDiffer>false</organismsDiffer>
    <experiments>3</experiments>
</comment>
<comment type="interaction">
    <interactant intactId="EBI-2836773">
        <id>Q9UK58</id>
    </interactant>
    <interactant intactId="EBI-8464037">
        <id>Q6NYC1</id>
        <label>JMJD6</label>
    </interactant>
    <organismsDiffer>false</organismsDiffer>
    <experiments>3</experiments>
</comment>
<comment type="interaction">
    <interactant intactId="EBI-2836773">
        <id>Q9UK58</id>
    </interactant>
    <interactant intactId="EBI-10176379">
        <id>P59991</id>
        <label>KRTAP12-2</label>
    </interactant>
    <organismsDiffer>false</organismsDiffer>
    <experiments>3</experiments>
</comment>
<comment type="interaction">
    <interactant intactId="EBI-2836773">
        <id>Q9UK58</id>
    </interactant>
    <interactant intactId="EBI-742459">
        <id>Q9BU76</id>
        <label>MMTAG2</label>
    </interactant>
    <organismsDiffer>false</organismsDiffer>
    <experiments>3</experiments>
</comment>
<comment type="interaction">
    <interactant intactId="EBI-2836773">
        <id>Q9UK58</id>
    </interactant>
    <interactant intactId="EBI-3920396">
        <id>Q6ZUT1</id>
        <label>NKAPD1</label>
    </interactant>
    <organismsDiffer>false</organismsDiffer>
    <experiments>6</experiments>
</comment>
<comment type="interaction">
    <interactant intactId="EBI-2836773">
        <id>Q9UK58</id>
    </interactant>
    <interactant intactId="EBI-11320284">
        <id>Q9NQX0</id>
        <label>PRDM6</label>
    </interactant>
    <organismsDiffer>false</organismsDiffer>
    <experiments>3</experiments>
</comment>
<comment type="interaction">
    <interactant intactId="EBI-2836773">
        <id>Q9UK58</id>
    </interactant>
    <interactant intactId="EBI-5280197">
        <id>O75400-2</id>
        <label>PRPF40A</label>
    </interactant>
    <organismsDiffer>false</organismsDiffer>
    <experiments>3</experiments>
</comment>
<comment type="interaction">
    <interactant intactId="EBI-2836773">
        <id>Q9UK58</id>
    </interactant>
    <interactant intactId="EBI-1055693">
        <id>O75771</id>
        <label>RAD51D</label>
    </interactant>
    <organismsDiffer>false</organismsDiffer>
    <experiments>3</experiments>
</comment>
<comment type="interaction">
    <interactant intactId="EBI-2836773">
        <id>Q9UK58</id>
    </interactant>
    <interactant intactId="EBI-395959">
        <id>Q15287</id>
        <label>RNPS1</label>
    </interactant>
    <organismsDiffer>false</organismsDiffer>
    <experiments>4</experiments>
</comment>
<comment type="interaction">
    <interactant intactId="EBI-2836773">
        <id>Q9UK58</id>
    </interactant>
    <interactant intactId="EBI-745604">
        <id>Q9BUV0</id>
        <label>RSRP1</label>
    </interactant>
    <organismsDiffer>false</organismsDiffer>
    <experiments>3</experiments>
</comment>
<comment type="interaction">
    <interactant intactId="EBI-2836773">
        <id>Q9UK58</id>
    </interactant>
    <interactant intactId="EBI-751683">
        <id>Q9UHR5</id>
        <label>SAP30BP</label>
    </interactant>
    <organismsDiffer>false</organismsDiffer>
    <experiments>5</experiments>
</comment>
<comment type="interaction">
    <interactant intactId="EBI-2836773">
        <id>Q9UK58</id>
    </interactant>
    <interactant intactId="EBI-741237">
        <id>O60504</id>
        <label>SORBS3</label>
    </interactant>
    <organismsDiffer>false</organismsDiffer>
    <experiments>3</experiments>
</comment>
<comment type="interaction">
    <interactant intactId="EBI-2836773">
        <id>Q9UK58</id>
    </interactant>
    <interactant intactId="EBI-10268630">
        <id>Q8N9Q2</id>
        <label>SREK1IP1</label>
    </interactant>
    <organismsDiffer>false</organismsDiffer>
    <experiments>3</experiments>
</comment>
<comment type="interaction">
    <interactant intactId="EBI-2836773">
        <id>Q9UK58</id>
    </interactant>
    <interactant intactId="EBI-1105213">
        <id>Q9UBB9</id>
        <label>TFIP11</label>
    </interactant>
    <organismsDiffer>false</organismsDiffer>
    <experiments>3</experiments>
</comment>
<comment type="interaction">
    <interactant intactId="EBI-2836773">
        <id>Q9UK58</id>
    </interactant>
    <interactant intactId="EBI-527853">
        <id>Q9UGI0</id>
        <label>ZRANB1</label>
    </interactant>
    <organismsDiffer>false</organismsDiffer>
    <experiments>3</experiments>
</comment>
<comment type="interaction">
    <interactant intactId="EBI-2836773">
        <id>Q9UK58</id>
    </interactant>
    <interactant intactId="EBI-6657923">
        <id>Q15696</id>
        <label>ZRSR2</label>
    </interactant>
    <organismsDiffer>false</organismsDiffer>
    <experiments>3</experiments>
</comment>
<comment type="interaction">
    <interactant intactId="EBI-25873837">
        <id>Q9UK58-5</id>
    </interactant>
    <interactant intactId="EBI-16041593">
        <id>O94985-2</id>
        <label>CLSTN1</label>
    </interactant>
    <organismsDiffer>false</organismsDiffer>
    <experiments>3</experiments>
</comment>
<comment type="interaction">
    <interactant intactId="EBI-25873837">
        <id>Q9UK58-5</id>
    </interactant>
    <interactant intactId="EBI-21591415">
        <id>P13473-2</id>
        <label>LAMP2</label>
    </interactant>
    <organismsDiffer>false</organismsDiffer>
    <experiments>3</experiments>
</comment>
<comment type="interaction">
    <interactant intactId="EBI-25873837">
        <id>Q9UK58-5</id>
    </interactant>
    <interactant intactId="EBI-5280197">
        <id>O75400-2</id>
        <label>PRPF40A</label>
    </interactant>
    <organismsDiffer>false</organismsDiffer>
    <experiments>3</experiments>
</comment>
<comment type="interaction">
    <interactant intactId="EBI-25873837">
        <id>Q9UK58-5</id>
    </interactant>
    <interactant intactId="EBI-2623095">
        <id>Q9Y371</id>
        <label>SH3GLB1</label>
    </interactant>
    <organismsDiffer>false</organismsDiffer>
    <experiments>3</experiments>
</comment>
<comment type="subcellular location">
    <subcellularLocation>
        <location evidence="7">Nucleus speckle</location>
    </subcellularLocation>
    <subcellularLocation>
        <location evidence="7">Nucleus</location>
        <location evidence="7">Nucleoplasm</location>
    </subcellularLocation>
    <text evidence="1">Found in nuclear intrachromatin granules clusters (IGC), also called nuclear speckles, which are storage compartments for nuclear proteins involved in mRNA processing.</text>
</comment>
<comment type="alternative products">
    <event type="alternative splicing"/>
    <isoform>
        <id>Q9UK58-1</id>
        <name>1</name>
        <name>Cyclin L alpha</name>
        <name>cyclin L1alpha</name>
        <sequence type="displayed"/>
    </isoform>
    <isoform>
        <id>Q9UK58-4</id>
        <name>2</name>
        <name>Cyclin L beta</name>
        <name>cyclin L1beta</name>
        <sequence type="described" ref="VSP_016122 VSP_016123"/>
    </isoform>
    <isoform>
        <id>Q9UK58-5</id>
        <name>3</name>
        <name>Cyclin L gamma</name>
        <name>cyclin L1gamma</name>
        <sequence type="described" ref="VSP_016120 VSP_016121"/>
    </isoform>
    <isoform>
        <id>Q9UK58-6</id>
        <name>4</name>
        <sequence type="described" ref="VSP_058299 VSP_058300"/>
    </isoform>
    <text>Ccnl1 is an immediate-early gene with independently regulated isoforms.</text>
</comment>
<comment type="tissue specificity">
    <text evidence="4 5 6 7">Widely expressed. Overexpression in primary tumors of head and neck squamous cell carcinomas (HNSCC).</text>
</comment>
<comment type="domain">
    <text evidence="4">Contains a RS region (arginine-serine dipeptide repeat) within the C-terminal domain which is the hallmark of the SR family of splicing factors. This region probably plays a role in protein-protein interactions.</text>
</comment>
<comment type="miscellaneous">
    <text>CCNL1 is amplified in several HNSCC. May play a critical role in the formation of loco-regional metastases and an unfavorable clinical outcome of HNSCC.</text>
</comment>
<comment type="miscellaneous">
    <molecule>Isoform 2</molecule>
    <text evidence="10">May be produced at very low levels due to a premature stop codon in the mRNA, leading to nonsense-mediated mRNA decay.</text>
</comment>
<comment type="miscellaneous">
    <molecule>Isoform 3</molecule>
    <text evidence="10">May be produced at very low levels due to a premature stop codon in the mRNA, leading to nonsense-mediated mRNA decay.</text>
</comment>
<comment type="similarity">
    <text evidence="10">Belongs to the cyclin family. Cyclin L subfamily.</text>
</comment>
<comment type="sequence caution" evidence="10">
    <conflict type="miscellaneous discrepancy">
        <sequence resource="EMBL-CDS" id="AAF64257"/>
    </conflict>
    <text>Probable cloning artifact.</text>
</comment>
<comment type="sequence caution" evidence="10">
    <conflict type="miscellaneous discrepancy">
        <sequence resource="EMBL-CDS" id="AAQ89026"/>
    </conflict>
    <text>Probable cloning artifact.</text>
</comment>
<accession>Q9UK58</accession>
<accession>B3KMY3</accession>
<accession>C9JPL0</accession>
<accession>Q6NVY9</accession>
<accession>Q6UWS7</accession>
<accession>Q8NI48</accession>
<accession>Q96QT0</accession>
<accession>Q9NZF3</accession>
<dbReference type="EMBL" id="AF180920">
    <property type="protein sequence ID" value="AAD53184.1"/>
    <property type="molecule type" value="mRNA"/>
</dbReference>
<dbReference type="EMBL" id="AF367476">
    <property type="protein sequence ID" value="AAM21204.1"/>
    <property type="molecule type" value="mRNA"/>
</dbReference>
<dbReference type="EMBL" id="AF367477">
    <property type="protein sequence ID" value="AAM21205.1"/>
    <property type="molecule type" value="mRNA"/>
</dbReference>
<dbReference type="EMBL" id="AY034790">
    <property type="protein sequence ID" value="AAK61551.1"/>
    <property type="molecule type" value="mRNA"/>
</dbReference>
<dbReference type="EMBL" id="AK022974">
    <property type="protein sequence ID" value="BAG51145.1"/>
    <property type="molecule type" value="mRNA"/>
</dbReference>
<dbReference type="EMBL" id="AK122738">
    <property type="status" value="NOT_ANNOTATED_CDS"/>
    <property type="molecule type" value="mRNA"/>
</dbReference>
<dbReference type="EMBL" id="AC104411">
    <property type="status" value="NOT_ANNOTATED_CDS"/>
    <property type="molecule type" value="Genomic_DNA"/>
</dbReference>
<dbReference type="EMBL" id="CH471052">
    <property type="protein sequence ID" value="EAW78712.1"/>
    <property type="molecule type" value="Genomic_DNA"/>
</dbReference>
<dbReference type="EMBL" id="BC007081">
    <property type="protein sequence ID" value="AAH07081.1"/>
    <property type="molecule type" value="mRNA"/>
</dbReference>
<dbReference type="EMBL" id="BC038394">
    <property type="protein sequence ID" value="AAH38394.1"/>
    <property type="molecule type" value="mRNA"/>
</dbReference>
<dbReference type="EMBL" id="BC067812">
    <property type="protein sequence ID" value="AAH67812.1"/>
    <property type="molecule type" value="mRNA"/>
</dbReference>
<dbReference type="EMBL" id="AF208843">
    <property type="protein sequence ID" value="AAF64257.1"/>
    <property type="status" value="ALT_SEQ"/>
    <property type="molecule type" value="mRNA"/>
</dbReference>
<dbReference type="EMBL" id="AY358663">
    <property type="protein sequence ID" value="AAQ89026.1"/>
    <property type="status" value="ALT_SEQ"/>
    <property type="molecule type" value="mRNA"/>
</dbReference>
<dbReference type="CCDS" id="CCDS3178.1">
    <molecule id="Q9UK58-1"/>
</dbReference>
<dbReference type="CCDS" id="CCDS77847.1">
    <molecule id="Q9UK58-6"/>
</dbReference>
<dbReference type="RefSeq" id="NP_001295114.1">
    <molecule id="Q9UK58-6"/>
    <property type="nucleotide sequence ID" value="NM_001308185.2"/>
</dbReference>
<dbReference type="RefSeq" id="NP_064703.1">
    <molecule id="Q9UK58-1"/>
    <property type="nucleotide sequence ID" value="NM_020307.4"/>
</dbReference>
<dbReference type="RefSeq" id="XP_016862381.1">
    <property type="nucleotide sequence ID" value="XM_017006892.1"/>
</dbReference>
<dbReference type="RefSeq" id="XP_016862382.1">
    <property type="nucleotide sequence ID" value="XM_017006893.1"/>
</dbReference>
<dbReference type="RefSeq" id="XP_016862383.1">
    <property type="nucleotide sequence ID" value="XM_017006894.1"/>
</dbReference>
<dbReference type="RefSeq" id="XP_016862384.1">
    <property type="nucleotide sequence ID" value="XM_017006895.1"/>
</dbReference>
<dbReference type="RefSeq" id="XP_016862385.1">
    <property type="nucleotide sequence ID" value="XM_017006896.1"/>
</dbReference>
<dbReference type="RefSeq" id="XP_054203292.1">
    <molecule id="Q9UK58-4"/>
    <property type="nucleotide sequence ID" value="XM_054347317.1"/>
</dbReference>
<dbReference type="SMR" id="Q9UK58"/>
<dbReference type="BioGRID" id="121327">
    <property type="interactions" value="61"/>
</dbReference>
<dbReference type="ComplexPortal" id="CPX-341">
    <property type="entry name" value="Cyclin L1-CDK11A(p110) complex"/>
</dbReference>
<dbReference type="ComplexPortal" id="CPX-344">
    <property type="entry name" value="Cyclin L1-CDK11A(p58) complex"/>
</dbReference>
<dbReference type="ComplexPortal" id="CPX-346">
    <property type="entry name" value="Cyclin L1-CDK11B(p58) complex"/>
</dbReference>
<dbReference type="ComplexPortal" id="CPX-348">
    <property type="entry name" value="Cyclin L1-CDK11B(p110) complex"/>
</dbReference>
<dbReference type="FunCoup" id="Q9UK58">
    <property type="interactions" value="2345"/>
</dbReference>
<dbReference type="IntAct" id="Q9UK58">
    <property type="interactions" value="56"/>
</dbReference>
<dbReference type="MINT" id="Q9UK58"/>
<dbReference type="STRING" id="9606.ENSP00000295926"/>
<dbReference type="GlyGen" id="Q9UK58">
    <property type="glycosylation" value="3 sites, 1 O-linked glycan (1 site)"/>
</dbReference>
<dbReference type="iPTMnet" id="Q9UK58"/>
<dbReference type="PhosphoSitePlus" id="Q9UK58"/>
<dbReference type="BioMuta" id="CCNL1"/>
<dbReference type="DMDM" id="74753368"/>
<dbReference type="jPOST" id="Q9UK58"/>
<dbReference type="MassIVE" id="Q9UK58"/>
<dbReference type="PaxDb" id="9606-ENSP00000295926"/>
<dbReference type="PeptideAtlas" id="Q9UK58"/>
<dbReference type="ProteomicsDB" id="11129"/>
<dbReference type="ProteomicsDB" id="84724">
    <molecule id="Q9UK58-1"/>
</dbReference>
<dbReference type="ProteomicsDB" id="84725">
    <molecule id="Q9UK58-4"/>
</dbReference>
<dbReference type="ProteomicsDB" id="84726">
    <molecule id="Q9UK58-5"/>
</dbReference>
<dbReference type="Pumba" id="Q9UK58"/>
<dbReference type="Antibodypedia" id="18411">
    <property type="antibodies" value="231 antibodies from 34 providers"/>
</dbReference>
<dbReference type="DNASU" id="57018"/>
<dbReference type="Ensembl" id="ENST00000295925.5">
    <molecule id="Q9UK58-5"/>
    <property type="protein sequence ID" value="ENSP00000295925.4"/>
    <property type="gene ID" value="ENSG00000163660.12"/>
</dbReference>
<dbReference type="Ensembl" id="ENST00000295926.8">
    <molecule id="Q9UK58-1"/>
    <property type="protein sequence ID" value="ENSP00000295926.4"/>
    <property type="gene ID" value="ENSG00000163660.12"/>
</dbReference>
<dbReference type="Ensembl" id="ENST00000461804.5">
    <molecule id="Q9UK58-6"/>
    <property type="protein sequence ID" value="ENSP00000420277.1"/>
    <property type="gene ID" value="ENSG00000163660.12"/>
</dbReference>
<dbReference type="Ensembl" id="ENST00000465947.5">
    <molecule id="Q9UK58-5"/>
    <property type="protein sequence ID" value="ENSP00000418094.1"/>
    <property type="gene ID" value="ENSG00000163660.12"/>
</dbReference>
<dbReference type="Ensembl" id="ENST00000470121.5">
    <molecule id="Q9UK58-4"/>
    <property type="protein sequence ID" value="ENSP00000417237.1"/>
    <property type="gene ID" value="ENSG00000163660.12"/>
</dbReference>
<dbReference type="Ensembl" id="ENST00000475298.5">
    <molecule id="Q9UK58-5"/>
    <property type="protein sequence ID" value="ENSP00000417343.1"/>
    <property type="gene ID" value="ENSG00000163660.12"/>
</dbReference>
<dbReference type="Ensembl" id="ENST00000477127.5">
    <molecule id="Q9UK58-5"/>
    <property type="protein sequence ID" value="ENSP00000418449.1"/>
    <property type="gene ID" value="ENSG00000163660.12"/>
</dbReference>
<dbReference type="Ensembl" id="ENST00000631619.1">
    <molecule id="Q9UK58-5"/>
    <property type="protein sequence ID" value="ENSP00000487951.1"/>
    <property type="gene ID" value="ENSG00000163660.12"/>
</dbReference>
<dbReference type="GeneID" id="57018"/>
<dbReference type="KEGG" id="hsa:57018"/>
<dbReference type="MANE-Select" id="ENST00000295926.8">
    <property type="protein sequence ID" value="ENSP00000295926.4"/>
    <property type="RefSeq nucleotide sequence ID" value="NM_020307.4"/>
    <property type="RefSeq protein sequence ID" value="NP_064703.1"/>
</dbReference>
<dbReference type="UCSC" id="uc003fbd.2">
    <property type="organism name" value="human"/>
</dbReference>
<dbReference type="UCSC" id="uc003fbf.4">
    <molecule id="Q9UK58-1"/>
    <property type="organism name" value="human"/>
</dbReference>
<dbReference type="AGR" id="HGNC:20569"/>
<dbReference type="CTD" id="57018"/>
<dbReference type="DisGeNET" id="57018"/>
<dbReference type="GeneCards" id="CCNL1"/>
<dbReference type="HGNC" id="HGNC:20569">
    <property type="gene designation" value="CCNL1"/>
</dbReference>
<dbReference type="HPA" id="ENSG00000163660">
    <property type="expression patterns" value="Low tissue specificity"/>
</dbReference>
<dbReference type="MIM" id="613384">
    <property type="type" value="gene"/>
</dbReference>
<dbReference type="neXtProt" id="NX_Q9UK58"/>
<dbReference type="OpenTargets" id="ENSG00000163660"/>
<dbReference type="VEuPathDB" id="HostDB:ENSG00000163660"/>
<dbReference type="eggNOG" id="KOG0835">
    <property type="taxonomic scope" value="Eukaryota"/>
</dbReference>
<dbReference type="GeneTree" id="ENSGT00940000159135"/>
<dbReference type="HOGENOM" id="CLU_107641_0_0_1"/>
<dbReference type="InParanoid" id="Q9UK58"/>
<dbReference type="OMA" id="GHKHRDG"/>
<dbReference type="OrthoDB" id="10264655at2759"/>
<dbReference type="PAN-GO" id="Q9UK58">
    <property type="GO annotations" value="3 GO annotations based on evolutionary models"/>
</dbReference>
<dbReference type="PhylomeDB" id="Q9UK58"/>
<dbReference type="TreeFam" id="TF101011"/>
<dbReference type="PathwayCommons" id="Q9UK58"/>
<dbReference type="SignaLink" id="Q9UK58"/>
<dbReference type="BioGRID-ORCS" id="57018">
    <property type="hits" value="343 hits in 1164 CRISPR screens"/>
</dbReference>
<dbReference type="CD-CODE" id="804901D1">
    <property type="entry name" value="Nuclear speckle"/>
</dbReference>
<dbReference type="ChiTaRS" id="CCNL1">
    <property type="organism name" value="human"/>
</dbReference>
<dbReference type="GeneWiki" id="CCNL1"/>
<dbReference type="GenomeRNAi" id="57018"/>
<dbReference type="Pharos" id="Q9UK58">
    <property type="development level" value="Tbio"/>
</dbReference>
<dbReference type="PRO" id="PR:Q9UK58"/>
<dbReference type="Proteomes" id="UP000005640">
    <property type="component" value="Chromosome 3"/>
</dbReference>
<dbReference type="RNAct" id="Q9UK58">
    <property type="molecule type" value="protein"/>
</dbReference>
<dbReference type="Bgee" id="ENSG00000163660">
    <property type="expression patterns" value="Expressed in mucosa of stomach and 197 other cell types or tissues"/>
</dbReference>
<dbReference type="ExpressionAtlas" id="Q9UK58">
    <property type="expression patterns" value="baseline and differential"/>
</dbReference>
<dbReference type="GO" id="GO:0000307">
    <property type="term" value="C:cyclin-dependent protein kinase holoenzyme complex"/>
    <property type="evidence" value="ECO:0000353"/>
    <property type="project" value="ComplexPortal"/>
</dbReference>
<dbReference type="GO" id="GO:0016607">
    <property type="term" value="C:nuclear speck"/>
    <property type="evidence" value="ECO:0007669"/>
    <property type="project" value="UniProtKB-SubCell"/>
</dbReference>
<dbReference type="GO" id="GO:0005634">
    <property type="term" value="C:nucleus"/>
    <property type="evidence" value="ECO:0000314"/>
    <property type="project" value="MGI"/>
</dbReference>
<dbReference type="GO" id="GO:0016538">
    <property type="term" value="F:cyclin-dependent protein serine/threonine kinase regulator activity"/>
    <property type="evidence" value="ECO:0000318"/>
    <property type="project" value="GO_Central"/>
</dbReference>
<dbReference type="GO" id="GO:0042981">
    <property type="term" value="P:regulation of apoptotic process"/>
    <property type="evidence" value="ECO:0000303"/>
    <property type="project" value="ComplexPortal"/>
</dbReference>
<dbReference type="GO" id="GO:0051726">
    <property type="term" value="P:regulation of cell cycle"/>
    <property type="evidence" value="ECO:0000303"/>
    <property type="project" value="ComplexPortal"/>
</dbReference>
<dbReference type="GO" id="GO:0046605">
    <property type="term" value="P:regulation of centrosome cycle"/>
    <property type="evidence" value="ECO:0000303"/>
    <property type="project" value="ComplexPortal"/>
</dbReference>
<dbReference type="GO" id="GO:0043484">
    <property type="term" value="P:regulation of RNA splicing"/>
    <property type="evidence" value="ECO:0000314"/>
    <property type="project" value="ComplexPortal"/>
</dbReference>
<dbReference type="GO" id="GO:0006357">
    <property type="term" value="P:regulation of transcription by RNA polymerase II"/>
    <property type="evidence" value="ECO:0007669"/>
    <property type="project" value="InterPro"/>
</dbReference>
<dbReference type="CDD" id="cd20592">
    <property type="entry name" value="CYCLIN_CCNL1_rpt2"/>
    <property type="match status" value="1"/>
</dbReference>
<dbReference type="FunFam" id="1.10.472.10:FF:000014">
    <property type="entry name" value="cyclin-L1 isoform X1"/>
    <property type="match status" value="1"/>
</dbReference>
<dbReference type="FunFam" id="1.10.472.10:FF:000016">
    <property type="entry name" value="cyclin-L1 isoform X1"/>
    <property type="match status" value="1"/>
</dbReference>
<dbReference type="Gene3D" id="1.10.472.10">
    <property type="entry name" value="Cyclin-like"/>
    <property type="match status" value="2"/>
</dbReference>
<dbReference type="InterPro" id="IPR013763">
    <property type="entry name" value="Cyclin-like_dom"/>
</dbReference>
<dbReference type="InterPro" id="IPR036915">
    <property type="entry name" value="Cyclin-like_sf"/>
</dbReference>
<dbReference type="InterPro" id="IPR043198">
    <property type="entry name" value="Cyclin/Ssn8"/>
</dbReference>
<dbReference type="InterPro" id="IPR004367">
    <property type="entry name" value="Cyclin_C-dom"/>
</dbReference>
<dbReference type="InterPro" id="IPR006671">
    <property type="entry name" value="Cyclin_N"/>
</dbReference>
<dbReference type="PANTHER" id="PTHR10026">
    <property type="entry name" value="CYCLIN"/>
    <property type="match status" value="1"/>
</dbReference>
<dbReference type="Pfam" id="PF02984">
    <property type="entry name" value="Cyclin_C"/>
    <property type="match status" value="1"/>
</dbReference>
<dbReference type="Pfam" id="PF00134">
    <property type="entry name" value="Cyclin_N"/>
    <property type="match status" value="1"/>
</dbReference>
<dbReference type="PIRSF" id="PIRSF036580">
    <property type="entry name" value="Cyclin_L"/>
    <property type="match status" value="1"/>
</dbReference>
<dbReference type="SMART" id="SM00385">
    <property type="entry name" value="CYCLIN"/>
    <property type="match status" value="2"/>
</dbReference>
<dbReference type="SMART" id="SM01332">
    <property type="entry name" value="Cyclin_C"/>
    <property type="match status" value="1"/>
</dbReference>
<dbReference type="SUPFAM" id="SSF47954">
    <property type="entry name" value="Cyclin-like"/>
    <property type="match status" value="2"/>
</dbReference>
<reference key="1">
    <citation type="journal article" date="2002" name="J. Biol. Chem.">
        <title>Cyclin L is an RS domain protein involved in pre-mRNA splicing.</title>
        <authorList>
            <person name="Dickinson L.A."/>
            <person name="Edgar A.J."/>
            <person name="Ehley J."/>
            <person name="Gottesfeld J.M."/>
        </authorList>
    </citation>
    <scope>NUCLEOTIDE SEQUENCE [MRNA] (ISOFORMS 1; 2 AND 3)</scope>
    <scope>FUNCTION</scope>
    <scope>TISSUE SPECIFICITY</scope>
    <scope>DOMAIN</scope>
    <scope>INTERACTION WITH CDC2L AND SFRS2</scope>
    <source>
        <tissue>Lung</tissue>
    </source>
</reference>
<reference key="2">
    <citation type="journal article" date="2004" name="Nat. Genet.">
        <title>Complete sequencing and characterization of 21,243 full-length human cDNAs.</title>
        <authorList>
            <person name="Ota T."/>
            <person name="Suzuki Y."/>
            <person name="Nishikawa T."/>
            <person name="Otsuki T."/>
            <person name="Sugiyama T."/>
            <person name="Irie R."/>
            <person name="Wakamatsu A."/>
            <person name="Hayashi K."/>
            <person name="Sato H."/>
            <person name="Nagai K."/>
            <person name="Kimura K."/>
            <person name="Makita H."/>
            <person name="Sekine M."/>
            <person name="Obayashi M."/>
            <person name="Nishi T."/>
            <person name="Shibahara T."/>
            <person name="Tanaka T."/>
            <person name="Ishii S."/>
            <person name="Yamamoto J."/>
            <person name="Saito K."/>
            <person name="Kawai Y."/>
            <person name="Isono Y."/>
            <person name="Nakamura Y."/>
            <person name="Nagahari K."/>
            <person name="Murakami K."/>
            <person name="Yasuda T."/>
            <person name="Iwayanagi T."/>
            <person name="Wagatsuma M."/>
            <person name="Shiratori A."/>
            <person name="Sudo H."/>
            <person name="Hosoiri T."/>
            <person name="Kaku Y."/>
            <person name="Kodaira H."/>
            <person name="Kondo H."/>
            <person name="Sugawara M."/>
            <person name="Takahashi M."/>
            <person name="Kanda K."/>
            <person name="Yokoi T."/>
            <person name="Furuya T."/>
            <person name="Kikkawa E."/>
            <person name="Omura Y."/>
            <person name="Abe K."/>
            <person name="Kamihara K."/>
            <person name="Katsuta N."/>
            <person name="Sato K."/>
            <person name="Tanikawa M."/>
            <person name="Yamazaki M."/>
            <person name="Ninomiya K."/>
            <person name="Ishibashi T."/>
            <person name="Yamashita H."/>
            <person name="Murakawa K."/>
            <person name="Fujimori K."/>
            <person name="Tanai H."/>
            <person name="Kimata M."/>
            <person name="Watanabe M."/>
            <person name="Hiraoka S."/>
            <person name="Chiba Y."/>
            <person name="Ishida S."/>
            <person name="Ono Y."/>
            <person name="Takiguchi S."/>
            <person name="Watanabe S."/>
            <person name="Yosida M."/>
            <person name="Hotuta T."/>
            <person name="Kusano J."/>
            <person name="Kanehori K."/>
            <person name="Takahashi-Fujii A."/>
            <person name="Hara H."/>
            <person name="Tanase T.-O."/>
            <person name="Nomura Y."/>
            <person name="Togiya S."/>
            <person name="Komai F."/>
            <person name="Hara R."/>
            <person name="Takeuchi K."/>
            <person name="Arita M."/>
            <person name="Imose N."/>
            <person name="Musashino K."/>
            <person name="Yuuki H."/>
            <person name="Oshima A."/>
            <person name="Sasaki N."/>
            <person name="Aotsuka S."/>
            <person name="Yoshikawa Y."/>
            <person name="Matsunawa H."/>
            <person name="Ichihara T."/>
            <person name="Shiohata N."/>
            <person name="Sano S."/>
            <person name="Moriya S."/>
            <person name="Momiyama H."/>
            <person name="Satoh N."/>
            <person name="Takami S."/>
            <person name="Terashima Y."/>
            <person name="Suzuki O."/>
            <person name="Nakagawa S."/>
            <person name="Senoh A."/>
            <person name="Mizoguchi H."/>
            <person name="Goto Y."/>
            <person name="Shimizu F."/>
            <person name="Wakebe H."/>
            <person name="Hishigaki H."/>
            <person name="Watanabe T."/>
            <person name="Sugiyama A."/>
            <person name="Takemoto M."/>
            <person name="Kawakami B."/>
            <person name="Yamazaki M."/>
            <person name="Watanabe K."/>
            <person name="Kumagai A."/>
            <person name="Itakura S."/>
            <person name="Fukuzumi Y."/>
            <person name="Fujimori Y."/>
            <person name="Komiyama M."/>
            <person name="Tashiro H."/>
            <person name="Tanigami A."/>
            <person name="Fujiwara T."/>
            <person name="Ono T."/>
            <person name="Yamada K."/>
            <person name="Fujii Y."/>
            <person name="Ozaki K."/>
            <person name="Hirao M."/>
            <person name="Ohmori Y."/>
            <person name="Kawabata A."/>
            <person name="Hikiji T."/>
            <person name="Kobatake N."/>
            <person name="Inagaki H."/>
            <person name="Ikema Y."/>
            <person name="Okamoto S."/>
            <person name="Okitani R."/>
            <person name="Kawakami T."/>
            <person name="Noguchi S."/>
            <person name="Itoh T."/>
            <person name="Shigeta K."/>
            <person name="Senba T."/>
            <person name="Matsumura K."/>
            <person name="Nakajima Y."/>
            <person name="Mizuno T."/>
            <person name="Morinaga M."/>
            <person name="Sasaki M."/>
            <person name="Togashi T."/>
            <person name="Oyama M."/>
            <person name="Hata H."/>
            <person name="Watanabe M."/>
            <person name="Komatsu T."/>
            <person name="Mizushima-Sugano J."/>
            <person name="Satoh T."/>
            <person name="Shirai Y."/>
            <person name="Takahashi Y."/>
            <person name="Nakagawa K."/>
            <person name="Okumura K."/>
            <person name="Nagase T."/>
            <person name="Nomura N."/>
            <person name="Kikuchi H."/>
            <person name="Masuho Y."/>
            <person name="Yamashita R."/>
            <person name="Nakai K."/>
            <person name="Yada T."/>
            <person name="Nakamura Y."/>
            <person name="Ohara O."/>
            <person name="Isogai T."/>
            <person name="Sugano S."/>
        </authorList>
    </citation>
    <scope>NUCLEOTIDE SEQUENCE [LARGE SCALE MRNA] (ISOFORMS 1 AND 4)</scope>
    <source>
        <tissue>Lung</tissue>
        <tissue>Teratocarcinoma</tissue>
    </source>
</reference>
<reference key="3">
    <citation type="journal article" date="2006" name="Nature">
        <title>The DNA sequence, annotation and analysis of human chromosome 3.</title>
        <authorList>
            <person name="Muzny D.M."/>
            <person name="Scherer S.E."/>
            <person name="Kaul R."/>
            <person name="Wang J."/>
            <person name="Yu J."/>
            <person name="Sudbrak R."/>
            <person name="Buhay C.J."/>
            <person name="Chen R."/>
            <person name="Cree A."/>
            <person name="Ding Y."/>
            <person name="Dugan-Rocha S."/>
            <person name="Gill R."/>
            <person name="Gunaratne P."/>
            <person name="Harris R.A."/>
            <person name="Hawes A.C."/>
            <person name="Hernandez J."/>
            <person name="Hodgson A.V."/>
            <person name="Hume J."/>
            <person name="Jackson A."/>
            <person name="Khan Z.M."/>
            <person name="Kovar-Smith C."/>
            <person name="Lewis L.R."/>
            <person name="Lozado R.J."/>
            <person name="Metzker M.L."/>
            <person name="Milosavljevic A."/>
            <person name="Miner G.R."/>
            <person name="Morgan M.B."/>
            <person name="Nazareth L.V."/>
            <person name="Scott G."/>
            <person name="Sodergren E."/>
            <person name="Song X.-Z."/>
            <person name="Steffen D."/>
            <person name="Wei S."/>
            <person name="Wheeler D.A."/>
            <person name="Wright M.W."/>
            <person name="Worley K.C."/>
            <person name="Yuan Y."/>
            <person name="Zhang Z."/>
            <person name="Adams C.Q."/>
            <person name="Ansari-Lari M.A."/>
            <person name="Ayele M."/>
            <person name="Brown M.J."/>
            <person name="Chen G."/>
            <person name="Chen Z."/>
            <person name="Clendenning J."/>
            <person name="Clerc-Blankenburg K.P."/>
            <person name="Chen R."/>
            <person name="Chen Z."/>
            <person name="Davis C."/>
            <person name="Delgado O."/>
            <person name="Dinh H.H."/>
            <person name="Dong W."/>
            <person name="Draper H."/>
            <person name="Ernst S."/>
            <person name="Fu G."/>
            <person name="Gonzalez-Garay M.L."/>
            <person name="Garcia D.K."/>
            <person name="Gillett W."/>
            <person name="Gu J."/>
            <person name="Hao B."/>
            <person name="Haugen E."/>
            <person name="Havlak P."/>
            <person name="He X."/>
            <person name="Hennig S."/>
            <person name="Hu S."/>
            <person name="Huang W."/>
            <person name="Jackson L.R."/>
            <person name="Jacob L.S."/>
            <person name="Kelly S.H."/>
            <person name="Kube M."/>
            <person name="Levy R."/>
            <person name="Li Z."/>
            <person name="Liu B."/>
            <person name="Liu J."/>
            <person name="Liu W."/>
            <person name="Lu J."/>
            <person name="Maheshwari M."/>
            <person name="Nguyen B.-V."/>
            <person name="Okwuonu G.O."/>
            <person name="Palmeiri A."/>
            <person name="Pasternak S."/>
            <person name="Perez L.M."/>
            <person name="Phelps K.A."/>
            <person name="Plopper F.J."/>
            <person name="Qiang B."/>
            <person name="Raymond C."/>
            <person name="Rodriguez R."/>
            <person name="Saenphimmachak C."/>
            <person name="Santibanez J."/>
            <person name="Shen H."/>
            <person name="Shen Y."/>
            <person name="Subramanian S."/>
            <person name="Tabor P.E."/>
            <person name="Verduzco D."/>
            <person name="Waldron L."/>
            <person name="Wang J."/>
            <person name="Wang J."/>
            <person name="Wang Q."/>
            <person name="Williams G.A."/>
            <person name="Wong G.K.-S."/>
            <person name="Yao Z."/>
            <person name="Zhang J."/>
            <person name="Zhang X."/>
            <person name="Zhao G."/>
            <person name="Zhou J."/>
            <person name="Zhou Y."/>
            <person name="Nelson D."/>
            <person name="Lehrach H."/>
            <person name="Reinhardt R."/>
            <person name="Naylor S.L."/>
            <person name="Yang H."/>
            <person name="Olson M."/>
            <person name="Weinstock G."/>
            <person name="Gibbs R.A."/>
        </authorList>
    </citation>
    <scope>NUCLEOTIDE SEQUENCE [LARGE SCALE GENOMIC DNA]</scope>
</reference>
<reference key="4">
    <citation type="submission" date="2005-09" db="EMBL/GenBank/DDBJ databases">
        <authorList>
            <person name="Mural R.J."/>
            <person name="Istrail S."/>
            <person name="Sutton G.G."/>
            <person name="Florea L."/>
            <person name="Halpern A.L."/>
            <person name="Mobarry C.M."/>
            <person name="Lippert R."/>
            <person name="Walenz B."/>
            <person name="Shatkay H."/>
            <person name="Dew I."/>
            <person name="Miller J.R."/>
            <person name="Flanigan M.J."/>
            <person name="Edwards N.J."/>
            <person name="Bolanos R."/>
            <person name="Fasulo D."/>
            <person name="Halldorsson B.V."/>
            <person name="Hannenhalli S."/>
            <person name="Turner R."/>
            <person name="Yooseph S."/>
            <person name="Lu F."/>
            <person name="Nusskern D.R."/>
            <person name="Shue B.C."/>
            <person name="Zheng X.H."/>
            <person name="Zhong F."/>
            <person name="Delcher A.L."/>
            <person name="Huson D.H."/>
            <person name="Kravitz S.A."/>
            <person name="Mouchard L."/>
            <person name="Reinert K."/>
            <person name="Remington K.A."/>
            <person name="Clark A.G."/>
            <person name="Waterman M.S."/>
            <person name="Eichler E.E."/>
            <person name="Adams M.D."/>
            <person name="Hunkapiller M.W."/>
            <person name="Myers E.W."/>
            <person name="Venter J.C."/>
        </authorList>
    </citation>
    <scope>NUCLEOTIDE SEQUENCE [LARGE SCALE GENOMIC DNA]</scope>
</reference>
<reference key="5">
    <citation type="journal article" date="2004" name="Genome Res.">
        <title>The status, quality, and expansion of the NIH full-length cDNA project: the Mammalian Gene Collection (MGC).</title>
        <authorList>
            <consortium name="The MGC Project Team"/>
        </authorList>
    </citation>
    <scope>NUCLEOTIDE SEQUENCE [LARGE SCALE MRNA] (ISOFORM 1)</scope>
    <source>
        <tissue>Brain</tissue>
        <tissue>Testis</tissue>
    </source>
</reference>
<reference key="6">
    <citation type="journal article" date="2000" name="Genome Res.">
        <title>Cloning and functional analysis of cDNAs with open reading frames for 300 previously undefined genes expressed in CD34+ hematopoietic stem/progenitor cells.</title>
        <authorList>
            <person name="Zhang Q.-H."/>
            <person name="Ye M."/>
            <person name="Wu X.-Y."/>
            <person name="Ren S.-X."/>
            <person name="Zhao M."/>
            <person name="Zhao C.-J."/>
            <person name="Fu G."/>
            <person name="Shen Y."/>
            <person name="Fan H.-Y."/>
            <person name="Lu G."/>
            <person name="Zhong M."/>
            <person name="Xu X.-R."/>
            <person name="Han Z.-G."/>
            <person name="Zhang J.-W."/>
            <person name="Tao J."/>
            <person name="Huang Q.-H."/>
            <person name="Zhou J."/>
            <person name="Hu G.-X."/>
            <person name="Gu J."/>
            <person name="Chen S.-J."/>
            <person name="Chen Z."/>
        </authorList>
    </citation>
    <scope>NUCLEOTIDE SEQUENCE [LARGE SCALE MRNA] OF 204-526 (ISOFORM 1)</scope>
    <source>
        <tissue>Bone marrow</tissue>
    </source>
</reference>
<reference key="7">
    <citation type="journal article" date="2003" name="Genome Res.">
        <title>The secreted protein discovery initiative (SPDI), a large-scale effort to identify novel human secreted and transmembrane proteins: a bioinformatics assessment.</title>
        <authorList>
            <person name="Clark H.F."/>
            <person name="Gurney A.L."/>
            <person name="Abaya E."/>
            <person name="Baker K."/>
            <person name="Baldwin D.T."/>
            <person name="Brush J."/>
            <person name="Chen J."/>
            <person name="Chow B."/>
            <person name="Chui C."/>
            <person name="Crowley C."/>
            <person name="Currell B."/>
            <person name="Deuel B."/>
            <person name="Dowd P."/>
            <person name="Eaton D."/>
            <person name="Foster J.S."/>
            <person name="Grimaldi C."/>
            <person name="Gu Q."/>
            <person name="Hass P.E."/>
            <person name="Heldens S."/>
            <person name="Huang A."/>
            <person name="Kim H.S."/>
            <person name="Klimowski L."/>
            <person name="Jin Y."/>
            <person name="Johnson S."/>
            <person name="Lee J."/>
            <person name="Lewis L."/>
            <person name="Liao D."/>
            <person name="Mark M.R."/>
            <person name="Robbie E."/>
            <person name="Sanchez C."/>
            <person name="Schoenfeld J."/>
            <person name="Seshagiri S."/>
            <person name="Simmons L."/>
            <person name="Singh J."/>
            <person name="Smith V."/>
            <person name="Stinson J."/>
            <person name="Vagts A."/>
            <person name="Vandlen R.L."/>
            <person name="Watanabe C."/>
            <person name="Wieand D."/>
            <person name="Woods K."/>
            <person name="Xie M.-H."/>
            <person name="Yansura D.G."/>
            <person name="Yi S."/>
            <person name="Yu G."/>
            <person name="Yuan J."/>
            <person name="Zhang M."/>
            <person name="Zhang Z."/>
            <person name="Goddard A.D."/>
            <person name="Wood W.I."/>
            <person name="Godowski P.J."/>
            <person name="Gray A.M."/>
        </authorList>
    </citation>
    <scope>NUCLEOTIDE SEQUENCE [LARGE SCALE MRNA] OF 226-526 (ISOFORM 1)</scope>
</reference>
<reference key="8">
    <citation type="journal article" date="2002" name="Cancer Res.">
        <title>Amplicon mapping and transcriptional analysis pinpoint cyclin L as a candidate oncogene in head and neck cancer.</title>
        <authorList>
            <person name="Redon R."/>
            <person name="Hussenet T."/>
            <person name="Bour G."/>
            <person name="Caulee K."/>
            <person name="Jost B."/>
            <person name="Muller D."/>
            <person name="Abecassis J."/>
            <person name="du Manoir S."/>
        </authorList>
    </citation>
    <scope>FUNCTION</scope>
    <scope>TISSUE SPECIFICITY</scope>
</reference>
<reference key="9">
    <citation type="journal article" date="2005" name="Br. J. Cancer">
        <title>Amplification of Cyclin L1 is associated with lymph node metastases in head and neck squamous cell carcinoma (HNSCC).</title>
        <authorList>
            <person name="Sticht C."/>
            <person name="Hofele C."/>
            <person name="Flechtenmacher C."/>
            <person name="Bosch F.X."/>
            <person name="Freier K."/>
            <person name="Lichter P."/>
            <person name="Joos S."/>
        </authorList>
    </citation>
    <scope>FUNCTION</scope>
    <scope>TISSUE SPECIFICITY</scope>
</reference>
<reference key="10">
    <citation type="journal article" date="2008" name="J. Biol. Chem.">
        <title>Characterization of cyclin L1 and L2 interactions with CDK11 and splicing factors: influence of cyclin L isoforms on splice site selection.</title>
        <authorList>
            <person name="Loyer P."/>
            <person name="Trembley J.H."/>
            <person name="Grenet J.A."/>
            <person name="Busson A."/>
            <person name="Corlu A."/>
            <person name="Zhao W."/>
            <person name="Kocak M."/>
            <person name="Kidd V.J."/>
            <person name="Lahti J.M."/>
        </authorList>
    </citation>
    <scope>FUNCTION</scope>
    <scope>IDENTIFICATION OF ISOFORMS 1; 2 AND 3</scope>
    <scope>INTERACTION WITH CDK11B; CKII; SRSF1 AND SRSF7/SLU7</scope>
    <scope>SUBCELLULAR LOCATION</scope>
    <scope>TISSUE SPECIFICITY</scope>
</reference>
<reference key="11">
    <citation type="journal article" date="2008" name="J. Proteome Res.">
        <title>Combining protein-based IMAC, peptide-based IMAC, and MudPIT for efficient phosphoproteomic analysis.</title>
        <authorList>
            <person name="Cantin G.T."/>
            <person name="Yi W."/>
            <person name="Lu B."/>
            <person name="Park S.K."/>
            <person name="Xu T."/>
            <person name="Lee J.-D."/>
            <person name="Yates J.R. III"/>
        </authorList>
    </citation>
    <scope>IDENTIFICATION BY MASS SPECTROMETRY [LARGE SCALE ANALYSIS]</scope>
    <source>
        <tissue>Cervix carcinoma</tissue>
    </source>
</reference>
<reference key="12">
    <citation type="journal article" date="2008" name="Proc. Natl. Acad. Sci. U.S.A.">
        <title>A quantitative atlas of mitotic phosphorylation.</title>
        <authorList>
            <person name="Dephoure N."/>
            <person name="Zhou C."/>
            <person name="Villen J."/>
            <person name="Beausoleil S.A."/>
            <person name="Bakalarski C.E."/>
            <person name="Elledge S.J."/>
            <person name="Gygi S.P."/>
        </authorList>
    </citation>
    <scope>PHOSPHORYLATION [LARGE SCALE ANALYSIS] AT THR-325; SER-335 AND SER-338</scope>
    <scope>IDENTIFICATION BY MASS SPECTROMETRY [LARGE SCALE ANALYSIS]</scope>
    <source>
        <tissue>Cervix carcinoma</tissue>
    </source>
</reference>
<reference key="13">
    <citation type="journal article" date="2009" name="Anal. Chem.">
        <title>Lys-N and trypsin cover complementary parts of the phosphoproteome in a refined SCX-based approach.</title>
        <authorList>
            <person name="Gauci S."/>
            <person name="Helbig A.O."/>
            <person name="Slijper M."/>
            <person name="Krijgsveld J."/>
            <person name="Heck A.J."/>
            <person name="Mohammed S."/>
        </authorList>
    </citation>
    <scope>IDENTIFICATION BY MASS SPECTROMETRY [LARGE SCALE ANALYSIS]</scope>
</reference>
<reference key="14">
    <citation type="journal article" date="2009" name="Sci. Signal.">
        <title>Quantitative phosphoproteomic analysis of T cell receptor signaling reveals system-wide modulation of protein-protein interactions.</title>
        <authorList>
            <person name="Mayya V."/>
            <person name="Lundgren D.H."/>
            <person name="Hwang S.-I."/>
            <person name="Rezaul K."/>
            <person name="Wu L."/>
            <person name="Eng J.K."/>
            <person name="Rodionov V."/>
            <person name="Han D.K."/>
        </authorList>
    </citation>
    <scope>PHOSPHORYLATION [LARGE SCALE ANALYSIS] AT SER-335; SER-338 AND SER-352</scope>
    <scope>IDENTIFICATION BY MASS SPECTROMETRY [LARGE SCALE ANALYSIS]</scope>
    <source>
        <tissue>Leukemic T-cell</tissue>
    </source>
</reference>
<reference key="15">
    <citation type="journal article" date="2010" name="Sci. Signal.">
        <title>Quantitative phosphoproteomics reveals widespread full phosphorylation site occupancy during mitosis.</title>
        <authorList>
            <person name="Olsen J.V."/>
            <person name="Vermeulen M."/>
            <person name="Santamaria A."/>
            <person name="Kumar C."/>
            <person name="Miller M.L."/>
            <person name="Jensen L.J."/>
            <person name="Gnad F."/>
            <person name="Cox J."/>
            <person name="Jensen T.S."/>
            <person name="Nigg E.A."/>
            <person name="Brunak S."/>
            <person name="Mann M."/>
        </authorList>
    </citation>
    <scope>PHOSPHORYLATION [LARGE SCALE ANALYSIS] AT SER-335; SER-352 AND SER-445</scope>
    <scope>IDENTIFICATION BY MASS SPECTROMETRY [LARGE SCALE ANALYSIS]</scope>
    <source>
        <tissue>Cervix carcinoma</tissue>
    </source>
</reference>
<reference key="16">
    <citation type="journal article" date="2011" name="Sci. Signal.">
        <title>System-wide temporal characterization of the proteome and phosphoproteome of human embryonic stem cell differentiation.</title>
        <authorList>
            <person name="Rigbolt K.T."/>
            <person name="Prokhorova T.A."/>
            <person name="Akimov V."/>
            <person name="Henningsen J."/>
            <person name="Johansen P.T."/>
            <person name="Kratchmarova I."/>
            <person name="Kassem M."/>
            <person name="Mann M."/>
            <person name="Olsen J.V."/>
            <person name="Blagoev B."/>
        </authorList>
    </citation>
    <scope>PHOSPHORYLATION [LARGE SCALE ANALYSIS] AT SER-352</scope>
    <scope>IDENTIFICATION BY MASS SPECTROMETRY [LARGE SCALE ANALYSIS]</scope>
</reference>
<reference key="17">
    <citation type="journal article" date="2013" name="J. Proteome Res.">
        <title>Toward a comprehensive characterization of a human cancer cell phosphoproteome.</title>
        <authorList>
            <person name="Zhou H."/>
            <person name="Di Palma S."/>
            <person name="Preisinger C."/>
            <person name="Peng M."/>
            <person name="Polat A.N."/>
            <person name="Heck A.J."/>
            <person name="Mohammed S."/>
        </authorList>
    </citation>
    <scope>PHOSPHORYLATION [LARGE SCALE ANALYSIS] AT SER-352; SER-355 AND SER-374</scope>
    <scope>IDENTIFICATION BY MASS SPECTROMETRY [LARGE SCALE ANALYSIS]</scope>
    <source>
        <tissue>Cervix carcinoma</tissue>
        <tissue>Erythroleukemia</tissue>
    </source>
</reference>
<reference key="18">
    <citation type="journal article" date="2014" name="J. Proteomics">
        <title>An enzyme assisted RP-RPLC approach for in-depth analysis of human liver phosphoproteome.</title>
        <authorList>
            <person name="Bian Y."/>
            <person name="Song C."/>
            <person name="Cheng K."/>
            <person name="Dong M."/>
            <person name="Wang F."/>
            <person name="Huang J."/>
            <person name="Sun D."/>
            <person name="Wang L."/>
            <person name="Ye M."/>
            <person name="Zou H."/>
        </authorList>
    </citation>
    <scope>PHOSPHORYLATION [LARGE SCALE ANALYSIS] AT SER-352</scope>
    <scope>IDENTIFICATION BY MASS SPECTROMETRY [LARGE SCALE ANALYSIS]</scope>
    <source>
        <tissue>Liver</tissue>
    </source>
</reference>
<reference key="19">
    <citation type="journal article" date="2015" name="Mol. Cell. Proteomics">
        <title>System-wide analysis of SUMOylation dynamics in response to replication stress reveals novel small ubiquitin-like modified target proteins and acceptor lysines relevant for genome stability.</title>
        <authorList>
            <person name="Xiao Z."/>
            <person name="Chang J.G."/>
            <person name="Hendriks I.A."/>
            <person name="Sigurdsson J.O."/>
            <person name="Olsen J.V."/>
            <person name="Vertegaal A.C."/>
        </authorList>
    </citation>
    <scope>SUMOYLATION [LARGE SCALE ANALYSIS] AT LYS-362</scope>
    <scope>IDENTIFICATION BY MASS SPECTROMETRY [LARGE SCALE ANALYSIS]</scope>
</reference>
<reference key="20">
    <citation type="journal article" date="2017" name="Nat. Struct. Mol. Biol.">
        <title>Site-specific mapping of the human SUMO proteome reveals co-modification with phosphorylation.</title>
        <authorList>
            <person name="Hendriks I.A."/>
            <person name="Lyon D."/>
            <person name="Young C."/>
            <person name="Jensen L.J."/>
            <person name="Vertegaal A.C."/>
            <person name="Nielsen M.L."/>
        </authorList>
    </citation>
    <scope>SUMOYLATION [LARGE SCALE ANALYSIS] AT LYS-339 AND LYS-347</scope>
    <scope>IDENTIFICATION BY MASS SPECTROMETRY [LARGE SCALE ANALYSIS]</scope>
</reference>
<reference key="21">
    <citation type="journal article" date="2021" name="Vaccines (Basel)">
        <title>HSV-1 ICP22 Is a Selective Viral Repressor of Cellular RNA Polymerase II-Mediated Transcription Elongation.</title>
        <authorList>
            <person name="Isa N.F."/>
            <person name="Bensaude O."/>
            <person name="Aziz N.C."/>
            <person name="Murphy S."/>
        </authorList>
    </citation>
    <scope>INTERACTION WITH HHV-1 TRANSCRIPTIONAL REGULATOR ICP22 (MICROBIAL INFECTION)</scope>
</reference>
<protein>
    <recommendedName>
        <fullName>Cyclin-L1</fullName>
        <shortName>Cyclin-L</shortName>
    </recommendedName>
</protein>
<feature type="chain" id="PRO_0000080480" description="Cyclin-L1">
    <location>
        <begin position="1"/>
        <end position="526"/>
    </location>
</feature>
<feature type="region of interest" description="Disordered" evidence="3">
    <location>
        <begin position="1"/>
        <end position="36"/>
    </location>
</feature>
<feature type="region of interest" description="Cyclin-like 1">
    <location>
        <begin position="88"/>
        <end position="190"/>
    </location>
</feature>
<feature type="region of interest" description="Cyclin-like 2">
    <location>
        <begin position="203"/>
        <end position="287"/>
    </location>
</feature>
<feature type="region of interest" description="Disordered" evidence="3">
    <location>
        <begin position="318"/>
        <end position="526"/>
    </location>
</feature>
<feature type="region of interest" description="RS">
    <location>
        <begin position="390"/>
        <end position="432"/>
    </location>
</feature>
<feature type="compositionally biased region" description="Basic and acidic residues" evidence="3">
    <location>
        <begin position="342"/>
        <end position="352"/>
    </location>
</feature>
<feature type="compositionally biased region" description="Basic and acidic residues" evidence="3">
    <location>
        <begin position="361"/>
        <end position="370"/>
    </location>
</feature>
<feature type="compositionally biased region" description="Basic residues" evidence="3">
    <location>
        <begin position="382"/>
        <end position="418"/>
    </location>
</feature>
<feature type="compositionally biased region" description="Basic residues" evidence="3">
    <location>
        <begin position="438"/>
        <end position="452"/>
    </location>
</feature>
<feature type="compositionally biased region" description="Basic residues" evidence="3">
    <location>
        <begin position="460"/>
        <end position="476"/>
    </location>
</feature>
<feature type="compositionally biased region" description="Basic residues" evidence="3">
    <location>
        <begin position="486"/>
        <end position="498"/>
    </location>
</feature>
<feature type="compositionally biased region" description="Basic and acidic residues" evidence="3">
    <location>
        <begin position="499"/>
        <end position="508"/>
    </location>
</feature>
<feature type="compositionally biased region" description="Basic residues" evidence="3">
    <location>
        <begin position="509"/>
        <end position="526"/>
    </location>
</feature>
<feature type="modified residue" description="Phosphothreonine" evidence="11">
    <location>
        <position position="325"/>
    </location>
</feature>
<feature type="modified residue" description="Phosphoserine" evidence="11 12 13">
    <location>
        <position position="335"/>
    </location>
</feature>
<feature type="modified residue" description="Phosphoserine" evidence="11 12">
    <location>
        <position position="338"/>
    </location>
</feature>
<feature type="modified residue" description="Phosphoserine" evidence="12 13 14 15 16">
    <location>
        <position position="352"/>
    </location>
</feature>
<feature type="modified residue" description="Phosphoserine" evidence="15">
    <location>
        <position position="355"/>
    </location>
</feature>
<feature type="modified residue" description="Phosphoserine" evidence="15">
    <location>
        <position position="374"/>
    </location>
</feature>
<feature type="modified residue" description="Phosphoserine" evidence="13">
    <location>
        <position position="445"/>
    </location>
</feature>
<feature type="cross-link" description="Glycyl lysine isopeptide (Lys-Gly) (interchain with G-Cter in SUMO2)" evidence="18">
    <location>
        <position position="339"/>
    </location>
</feature>
<feature type="cross-link" description="Glycyl lysine isopeptide (Lys-Gly) (interchain with G-Cter in SUMO2)" evidence="18">
    <location>
        <position position="347"/>
    </location>
</feature>
<feature type="cross-link" description="Glycyl lysine isopeptide (Lys-Gly) (interchain with G-Cter in SUMO2)" evidence="17">
    <location>
        <position position="362"/>
    </location>
</feature>
<feature type="splice variant" id="VSP_016120" description="In isoform 3." evidence="9">
    <original>RTPSPLILDQ</original>
    <variation>SDQLHLPKPG</variation>
    <location>
        <begin position="163"/>
        <end position="172"/>
    </location>
</feature>
<feature type="splice variant" id="VSP_016121" description="In isoform 3." evidence="9">
    <location>
        <begin position="173"/>
        <end position="526"/>
    </location>
</feature>
<feature type="splice variant" id="VSP_016122" description="In isoform 2." evidence="9">
    <original>NYMNDSL</original>
    <variation>VVHDGKS</variation>
    <location>
        <begin position="226"/>
        <end position="232"/>
    </location>
</feature>
<feature type="splice variant" id="VSP_016123" description="In isoform 2." evidence="9">
    <location>
        <begin position="233"/>
        <end position="526"/>
    </location>
</feature>
<feature type="splice variant" id="VSP_058299" description="In isoform 4.">
    <original>HYNNRRSRSGTYSSRSRS</original>
    <variation>QDEVLLRCPGRSRTPGLK</variation>
    <location>
        <begin position="411"/>
        <end position="428"/>
    </location>
</feature>
<feature type="splice variant" id="VSP_058300" description="In isoform 4.">
    <location>
        <begin position="429"/>
        <end position="526"/>
    </location>
</feature>
<feature type="sequence conflict" description="In Ref. 5; AAH67812." evidence="10" ref="5">
    <original>V</original>
    <variation>L</variation>
    <location>
        <position position="149"/>
    </location>
</feature>
<feature type="sequence conflict" description="In Ref. 6; AAF64257." evidence="10" ref="6">
    <original>RS</original>
    <variation>SP</variation>
    <location>
        <begin position="507"/>
        <end position="508"/>
    </location>
</feature>
<evidence type="ECO:0000250" key="1"/>
<evidence type="ECO:0000250" key="2">
    <source>
        <dbReference type="UniProtKB" id="Q9R1Q2"/>
    </source>
</evidence>
<evidence type="ECO:0000256" key="3">
    <source>
        <dbReference type="SAM" id="MobiDB-lite"/>
    </source>
</evidence>
<evidence type="ECO:0000269" key="4">
    <source>
    </source>
</evidence>
<evidence type="ECO:0000269" key="5">
    <source>
    </source>
</evidence>
<evidence type="ECO:0000269" key="6">
    <source>
    </source>
</evidence>
<evidence type="ECO:0000269" key="7">
    <source>
    </source>
</evidence>
<evidence type="ECO:0000269" key="8">
    <source>
    </source>
</evidence>
<evidence type="ECO:0000303" key="9">
    <source>
    </source>
</evidence>
<evidence type="ECO:0000305" key="10"/>
<evidence type="ECO:0007744" key="11">
    <source>
    </source>
</evidence>
<evidence type="ECO:0007744" key="12">
    <source>
    </source>
</evidence>
<evidence type="ECO:0007744" key="13">
    <source>
    </source>
</evidence>
<evidence type="ECO:0007744" key="14">
    <source>
    </source>
</evidence>
<evidence type="ECO:0007744" key="15">
    <source>
    </source>
</evidence>
<evidence type="ECO:0007744" key="16">
    <source>
    </source>
</evidence>
<evidence type="ECO:0007744" key="17">
    <source>
    </source>
</evidence>
<evidence type="ECO:0007744" key="18">
    <source>
    </source>
</evidence>
<gene>
    <name type="primary">CCNL1</name>
    <name type="ORF">BM-001</name>
    <name type="ORF">UNQ530/PRO1073</name>
</gene>
<proteinExistence type="evidence at protein level"/>
<sequence>MASGPHSTATAAAAASSAAPSAGGSSSGTTTTTTTTTGGILIGDRLYSEVSLTIDHSLIPEERLSPTPSMQDGLDLPSETDLRILGCELIQAAGILLRLPQVAMATGQVLFHRFFYSKSFVKHSFEIVAMACINLASKIEEAPRRIRDVINVFHHLRQLRGKRTPSPLILDQNYINTKNQVIKAERRVLKELGFCVHVKHPHKIIVMYLQVLECERNQTLVQTAWNYMNDSLRTNVFVRFQPETIACACIYLAARALQIPLPTRPHWFLLFGTTEEEIQEICIETLRLYTRKKPNYELLEKEVEKRKVALQEAKLKAKGLNPDGTPALSTLGGFSPASKPSSPREVKAEEKSPISINVKTVKKEPEDRQQASKSPYNGVRKDSKRSRNSRSASRSRSRTRSRSRSHTPRRHYNNRRSRSGTYSSRSRSRSRSHSESPRRHHNHGSPHLKAKHTRDDLKSSNRHGHKRKKSRSRSQSKSRDHSDAAKKHRHERGHHRDRRERSRSFERSHKSKHHGGSRSGHGRHRR</sequence>
<keyword id="KW-0025">Alternative splicing</keyword>
<keyword id="KW-0195">Cyclin</keyword>
<keyword id="KW-0945">Host-virus interaction</keyword>
<keyword id="KW-1017">Isopeptide bond</keyword>
<keyword id="KW-0539">Nucleus</keyword>
<keyword id="KW-0597">Phosphoprotein</keyword>
<keyword id="KW-1267">Proteomics identification</keyword>
<keyword id="KW-0656">Proto-oncogene</keyword>
<keyword id="KW-1185">Reference proteome</keyword>
<keyword id="KW-0677">Repeat</keyword>
<keyword id="KW-0804">Transcription</keyword>
<keyword id="KW-0805">Transcription regulation</keyword>
<keyword id="KW-0832">Ubl conjugation</keyword>
<organism>
    <name type="scientific">Homo sapiens</name>
    <name type="common">Human</name>
    <dbReference type="NCBI Taxonomy" id="9606"/>
    <lineage>
        <taxon>Eukaryota</taxon>
        <taxon>Metazoa</taxon>
        <taxon>Chordata</taxon>
        <taxon>Craniata</taxon>
        <taxon>Vertebrata</taxon>
        <taxon>Euteleostomi</taxon>
        <taxon>Mammalia</taxon>
        <taxon>Eutheria</taxon>
        <taxon>Euarchontoglires</taxon>
        <taxon>Primates</taxon>
        <taxon>Haplorrhini</taxon>
        <taxon>Catarrhini</taxon>
        <taxon>Hominidae</taxon>
        <taxon>Homo</taxon>
    </lineage>
</organism>
<name>CCNL1_HUMAN</name>